<name>DNAK2_SYNP6</name>
<keyword id="KW-0067">ATP-binding</keyword>
<keyword id="KW-0143">Chaperone</keyword>
<keyword id="KW-0547">Nucleotide-binding</keyword>
<keyword id="KW-0597">Phosphoprotein</keyword>
<keyword id="KW-0346">Stress response</keyword>
<reference key="1">
    <citation type="journal article" date="2007" name="Photosyn. Res.">
        <title>Complete nucleotide sequence of the freshwater unicellular cyanobacterium Synechococcus elongatus PCC 6301 chromosome: gene content and organization.</title>
        <authorList>
            <person name="Sugita C."/>
            <person name="Ogata K."/>
            <person name="Shikata M."/>
            <person name="Jikuya H."/>
            <person name="Takano J."/>
            <person name="Furumichi M."/>
            <person name="Kanehisa M."/>
            <person name="Omata T."/>
            <person name="Sugiura M."/>
            <person name="Sugita M."/>
        </authorList>
    </citation>
    <scope>NUCLEOTIDE SEQUENCE [LARGE SCALE GENOMIC DNA]</scope>
    <source>
        <strain>ATCC 27144 / PCC 6301 / SAUG 1402/1</strain>
    </source>
</reference>
<gene>
    <name evidence="1" type="primary">dnaK2</name>
    <name type="ordered locus">syc1636_c</name>
</gene>
<accession>Q5N1J4</accession>
<evidence type="ECO:0000255" key="1">
    <source>
        <dbReference type="HAMAP-Rule" id="MF_00332"/>
    </source>
</evidence>
<evidence type="ECO:0000256" key="2">
    <source>
        <dbReference type="SAM" id="MobiDB-lite"/>
    </source>
</evidence>
<proteinExistence type="inferred from homology"/>
<comment type="function">
    <text evidence="1">Acts as a chaperone.</text>
</comment>
<comment type="induction">
    <text evidence="1">By stress conditions e.g. heat shock.</text>
</comment>
<comment type="similarity">
    <text evidence="1">Belongs to the heat shock protein 70 family.</text>
</comment>
<organism>
    <name type="scientific">Synechococcus sp. (strain ATCC 27144 / PCC 6301 / SAUG 1402/1)</name>
    <name type="common">Anacystis nidulans</name>
    <dbReference type="NCBI Taxonomy" id="269084"/>
    <lineage>
        <taxon>Bacteria</taxon>
        <taxon>Bacillati</taxon>
        <taxon>Cyanobacteriota</taxon>
        <taxon>Cyanophyceae</taxon>
        <taxon>Synechococcales</taxon>
        <taxon>Synechococcaceae</taxon>
        <taxon>Synechococcus</taxon>
    </lineage>
</organism>
<dbReference type="EMBL" id="AP008231">
    <property type="protein sequence ID" value="BAD79826.1"/>
    <property type="molecule type" value="Genomic_DNA"/>
</dbReference>
<dbReference type="RefSeq" id="WP_011243946.1">
    <property type="nucleotide sequence ID" value="NC_006576.1"/>
</dbReference>
<dbReference type="SMR" id="Q5N1J4"/>
<dbReference type="KEGG" id="syc:syc1636_c"/>
<dbReference type="eggNOG" id="COG0443">
    <property type="taxonomic scope" value="Bacteria"/>
</dbReference>
<dbReference type="Proteomes" id="UP000001175">
    <property type="component" value="Chromosome"/>
</dbReference>
<dbReference type="GO" id="GO:0005524">
    <property type="term" value="F:ATP binding"/>
    <property type="evidence" value="ECO:0007669"/>
    <property type="project" value="UniProtKB-UniRule"/>
</dbReference>
<dbReference type="GO" id="GO:0140662">
    <property type="term" value="F:ATP-dependent protein folding chaperone"/>
    <property type="evidence" value="ECO:0007669"/>
    <property type="project" value="InterPro"/>
</dbReference>
<dbReference type="GO" id="GO:0051082">
    <property type="term" value="F:unfolded protein binding"/>
    <property type="evidence" value="ECO:0007669"/>
    <property type="project" value="InterPro"/>
</dbReference>
<dbReference type="CDD" id="cd10234">
    <property type="entry name" value="ASKHA_NBD_HSP70_DnaK-like"/>
    <property type="match status" value="1"/>
</dbReference>
<dbReference type="FunFam" id="2.60.34.10:FF:000014">
    <property type="entry name" value="Chaperone protein DnaK HSP70"/>
    <property type="match status" value="1"/>
</dbReference>
<dbReference type="FunFam" id="1.20.1270.10:FF:000001">
    <property type="entry name" value="Molecular chaperone DnaK"/>
    <property type="match status" value="1"/>
</dbReference>
<dbReference type="FunFam" id="3.30.420.40:FF:000004">
    <property type="entry name" value="Molecular chaperone DnaK"/>
    <property type="match status" value="1"/>
</dbReference>
<dbReference type="FunFam" id="3.90.640.10:FF:000003">
    <property type="entry name" value="Molecular chaperone DnaK"/>
    <property type="match status" value="1"/>
</dbReference>
<dbReference type="Gene3D" id="1.20.1270.10">
    <property type="match status" value="1"/>
</dbReference>
<dbReference type="Gene3D" id="3.30.420.40">
    <property type="match status" value="2"/>
</dbReference>
<dbReference type="Gene3D" id="3.90.640.10">
    <property type="entry name" value="Actin, Chain A, domain 4"/>
    <property type="match status" value="1"/>
</dbReference>
<dbReference type="Gene3D" id="2.60.34.10">
    <property type="entry name" value="Substrate Binding Domain Of DNAk, Chain A, domain 1"/>
    <property type="match status" value="1"/>
</dbReference>
<dbReference type="HAMAP" id="MF_00332">
    <property type="entry name" value="DnaK"/>
    <property type="match status" value="1"/>
</dbReference>
<dbReference type="InterPro" id="IPR043129">
    <property type="entry name" value="ATPase_NBD"/>
</dbReference>
<dbReference type="InterPro" id="IPR012725">
    <property type="entry name" value="Chaperone_DnaK"/>
</dbReference>
<dbReference type="InterPro" id="IPR018181">
    <property type="entry name" value="Heat_shock_70_CS"/>
</dbReference>
<dbReference type="InterPro" id="IPR029048">
    <property type="entry name" value="HSP70_C_sf"/>
</dbReference>
<dbReference type="InterPro" id="IPR029047">
    <property type="entry name" value="HSP70_peptide-bd_sf"/>
</dbReference>
<dbReference type="InterPro" id="IPR013126">
    <property type="entry name" value="Hsp_70_fam"/>
</dbReference>
<dbReference type="NCBIfam" id="NF001413">
    <property type="entry name" value="PRK00290.1"/>
    <property type="match status" value="1"/>
</dbReference>
<dbReference type="NCBIfam" id="NF003520">
    <property type="entry name" value="PRK05183.1"/>
    <property type="match status" value="1"/>
</dbReference>
<dbReference type="NCBIfam" id="TIGR02350">
    <property type="entry name" value="prok_dnaK"/>
    <property type="match status" value="1"/>
</dbReference>
<dbReference type="PANTHER" id="PTHR19375">
    <property type="entry name" value="HEAT SHOCK PROTEIN 70KDA"/>
    <property type="match status" value="1"/>
</dbReference>
<dbReference type="Pfam" id="PF00012">
    <property type="entry name" value="HSP70"/>
    <property type="match status" value="1"/>
</dbReference>
<dbReference type="PRINTS" id="PR00301">
    <property type="entry name" value="HEATSHOCK70"/>
</dbReference>
<dbReference type="SUPFAM" id="SSF53067">
    <property type="entry name" value="Actin-like ATPase domain"/>
    <property type="match status" value="2"/>
</dbReference>
<dbReference type="SUPFAM" id="SSF100934">
    <property type="entry name" value="Heat shock protein 70kD (HSP70), C-terminal subdomain"/>
    <property type="match status" value="1"/>
</dbReference>
<dbReference type="SUPFAM" id="SSF100920">
    <property type="entry name" value="Heat shock protein 70kD (HSP70), peptide-binding domain"/>
    <property type="match status" value="1"/>
</dbReference>
<dbReference type="PROSITE" id="PS00297">
    <property type="entry name" value="HSP70_1"/>
    <property type="match status" value="1"/>
</dbReference>
<dbReference type="PROSITE" id="PS00329">
    <property type="entry name" value="HSP70_2"/>
    <property type="match status" value="1"/>
</dbReference>
<dbReference type="PROSITE" id="PS01036">
    <property type="entry name" value="HSP70_3"/>
    <property type="match status" value="1"/>
</dbReference>
<protein>
    <recommendedName>
        <fullName evidence="1">Chaperone protein DnaK 2</fullName>
    </recommendedName>
    <alternativeName>
        <fullName evidence="1">HSP70 2</fullName>
    </alternativeName>
    <alternativeName>
        <fullName evidence="1">Heat shock 70 kDa protein 2</fullName>
    </alternativeName>
    <alternativeName>
        <fullName evidence="1">Heat shock protein 70 2</fullName>
    </alternativeName>
</protein>
<sequence length="634" mass="67776">MAKVVGIDLGTTNSCVAVMEGGKPTVIANAEGFRTTPSVVAFAKNQDRLVGQIAKRQAVMNPENTFYSVKRFIGRRPDEVTNELTEVAYKVDTSGNAVKLDSSNAGKQFAPEEISAQVLRKLAEDASKYLGETVTQAVIPVPAYFNDSQRQATKDAGKIAGLEVLRIINEPTAAALAYGLDKKSNERILVFDLGGGTFDVSVLEVGDGVFEVLATSGDTHLGGDDFDKKIVDFLAGEFQKNEGIDLRKDKQALQRLTEAAEKAKIELSSATQTEINLPFITATQDGPKHLDLTLTRAKFEELASDLIDRCRIPVEQAIKDAKLALSEIDEIVLVGGSTRIPAVQAIVKQMTGKEPNQSVNPDEVVAIGAAIQGGVLAGEVKDILLLDVTPLSLGVETLGGVMTKLIPRNTTIPTKKSETFSTAADGQTNVEIHVLQGEREMASDNKSLGTFRLDGIPPAPRGVPQIEVIFVIDANGILNVTAKDKGSGKEQSISITGASTLSDNEVDRMVKDAEANAAADKERRERIDLKNQADTLVYQSEKQLSELGDKISADEKSKVEGFIQELKDALAAEDYDKIRSIIEQLQQALYAAGSSVYQQASAEASANAQAGPSSSSSSSSGDDDVIDAEFSESK</sequence>
<feature type="chain" id="PRO_0000226019" description="Chaperone protein DnaK 2">
    <location>
        <begin position="1"/>
        <end position="634"/>
    </location>
</feature>
<feature type="region of interest" description="Disordered" evidence="2">
    <location>
        <begin position="600"/>
        <end position="634"/>
    </location>
</feature>
<feature type="compositionally biased region" description="Low complexity" evidence="2">
    <location>
        <begin position="600"/>
        <end position="620"/>
    </location>
</feature>
<feature type="compositionally biased region" description="Acidic residues" evidence="2">
    <location>
        <begin position="621"/>
        <end position="634"/>
    </location>
</feature>
<feature type="modified residue" description="Phosphothreonine; by autocatalysis" evidence="1">
    <location>
        <position position="197"/>
    </location>
</feature>